<dbReference type="EC" id="2.4.1.50" evidence="1"/>
<dbReference type="EMBL" id="BX469930">
    <property type="protein sequence ID" value="CAN87888.1"/>
    <property type="molecule type" value="Genomic_DNA"/>
</dbReference>
<dbReference type="RefSeq" id="NP_001103992.1">
    <property type="nucleotide sequence ID" value="NM_001110522.1"/>
</dbReference>
<dbReference type="SMR" id="A5PMF6"/>
<dbReference type="FunCoup" id="A5PMF6">
    <property type="interactions" value="708"/>
</dbReference>
<dbReference type="STRING" id="7955.ENSDARP00000075565"/>
<dbReference type="CAZy" id="GT25">
    <property type="family name" value="Glycosyltransferase Family 25"/>
</dbReference>
<dbReference type="GlyCosmos" id="A5PMF6">
    <property type="glycosylation" value="4 sites, No reported glycans"/>
</dbReference>
<dbReference type="PaxDb" id="7955-ENSDARP00000075565"/>
<dbReference type="PeptideAtlas" id="A5PMF6"/>
<dbReference type="Ensembl" id="ENSDART00000081122">
    <property type="protein sequence ID" value="ENSDARP00000075565"/>
    <property type="gene ID" value="ENSDARG00000058270"/>
</dbReference>
<dbReference type="GeneID" id="567859"/>
<dbReference type="KEGG" id="dre:567859"/>
<dbReference type="AGR" id="ZFIN:ZDB-GENE-070424-114"/>
<dbReference type="CTD" id="567859"/>
<dbReference type="ZFIN" id="ZDB-GENE-070424-114">
    <property type="gene designation" value="colgalt1b"/>
</dbReference>
<dbReference type="eggNOG" id="KOG4179">
    <property type="taxonomic scope" value="Eukaryota"/>
</dbReference>
<dbReference type="HOGENOM" id="CLU_024037_2_0_1"/>
<dbReference type="InParanoid" id="A5PMF6"/>
<dbReference type="OMA" id="MVNNPPL"/>
<dbReference type="OrthoDB" id="47375at2759"/>
<dbReference type="PhylomeDB" id="A5PMF6"/>
<dbReference type="TreeFam" id="TF313826"/>
<dbReference type="Reactome" id="R-DRE-1650814">
    <property type="pathway name" value="Collagen biosynthesis and modifying enzymes"/>
</dbReference>
<dbReference type="PRO" id="PR:A5PMF6"/>
<dbReference type="Proteomes" id="UP000000437">
    <property type="component" value="Chromosome 1"/>
</dbReference>
<dbReference type="Bgee" id="ENSDARG00000058270">
    <property type="expression patterns" value="Expressed in gastrula and 19 other cell types or tissues"/>
</dbReference>
<dbReference type="GO" id="GO:0005788">
    <property type="term" value="C:endoplasmic reticulum lumen"/>
    <property type="evidence" value="ECO:0000250"/>
    <property type="project" value="UniProtKB"/>
</dbReference>
<dbReference type="GO" id="GO:0050211">
    <property type="term" value="F:procollagen galactosyltransferase activity"/>
    <property type="evidence" value="ECO:0000250"/>
    <property type="project" value="UniProtKB"/>
</dbReference>
<dbReference type="GO" id="GO:1904028">
    <property type="term" value="P:positive regulation of collagen fibril organization"/>
    <property type="evidence" value="ECO:0000250"/>
    <property type="project" value="UniProtKB"/>
</dbReference>
<dbReference type="CDD" id="cd06532">
    <property type="entry name" value="Glyco_transf_25"/>
    <property type="match status" value="1"/>
</dbReference>
<dbReference type="FunFam" id="3.90.550.10:FF:000048">
    <property type="entry name" value="Glycosyltransferase 25 family member 1"/>
    <property type="match status" value="1"/>
</dbReference>
<dbReference type="Gene3D" id="3.90.550.10">
    <property type="entry name" value="Spore Coat Polysaccharide Biosynthesis Protein SpsA, Chain A"/>
    <property type="match status" value="1"/>
</dbReference>
<dbReference type="InterPro" id="IPR050757">
    <property type="entry name" value="Collagen_mod_GT25"/>
</dbReference>
<dbReference type="InterPro" id="IPR002654">
    <property type="entry name" value="Glyco_trans_25"/>
</dbReference>
<dbReference type="InterPro" id="IPR029044">
    <property type="entry name" value="Nucleotide-diphossugar_trans"/>
</dbReference>
<dbReference type="PANTHER" id="PTHR10730:SF28">
    <property type="entry name" value="PROCOLLAGEN GALACTOSYLTRANSFERASE 1"/>
    <property type="match status" value="1"/>
</dbReference>
<dbReference type="PANTHER" id="PTHR10730">
    <property type="entry name" value="PROCOLLAGEN-LYSINE,2-OXOGLUTARATE 5-DIOXYGENASE/GLYCOSYLTRANSFERASE 25 FAMILY MEMBER"/>
    <property type="match status" value="1"/>
</dbReference>
<dbReference type="Pfam" id="PF13704">
    <property type="entry name" value="Glyco_tranf_2_4"/>
    <property type="match status" value="1"/>
</dbReference>
<dbReference type="Pfam" id="PF01755">
    <property type="entry name" value="Glyco_transf_25"/>
    <property type="match status" value="1"/>
</dbReference>
<dbReference type="SUPFAM" id="SSF53448">
    <property type="entry name" value="Nucleotide-diphospho-sugar transferases"/>
    <property type="match status" value="1"/>
</dbReference>
<dbReference type="PROSITE" id="PS00014">
    <property type="entry name" value="ER_TARGET"/>
    <property type="match status" value="1"/>
</dbReference>
<name>GT251_DANRE</name>
<protein>
    <recommendedName>
        <fullName>Procollagen galactosyltransferase 1</fullName>
        <ecNumber evidence="1">2.4.1.50</ecNumber>
    </recommendedName>
    <alternativeName>
        <fullName>Collagen beta(1-O)galactosyltransferase 1</fullName>
    </alternativeName>
    <alternativeName>
        <fullName>Glycosyltransferase 25 family member 1</fullName>
    </alternativeName>
    <alternativeName>
        <fullName>Hydroxylysine galactosyltransferase 1</fullName>
    </alternativeName>
</protein>
<comment type="function">
    <text evidence="1">Beta-galactosyltransferase that transfers beta-galactose to hydroxylysine residues of type I collagen. By acting on collagen glycosylation, facilitates the formation of collagen triple helix.</text>
</comment>
<comment type="catalytic activity">
    <reaction evidence="1">
        <text>(5R)-5-hydroxy-L-lysyl-[collagen] + UDP-alpha-D-galactose = (5R)-5-O-(beta-D-galactosyl)-5-hydroxy-L-lysyl-[collagen] + UDP + H(+)</text>
        <dbReference type="Rhea" id="RHEA:12637"/>
        <dbReference type="Rhea" id="RHEA-COMP:12752"/>
        <dbReference type="Rhea" id="RHEA-COMP:12753"/>
        <dbReference type="ChEBI" id="CHEBI:15378"/>
        <dbReference type="ChEBI" id="CHEBI:58223"/>
        <dbReference type="ChEBI" id="CHEBI:66914"/>
        <dbReference type="ChEBI" id="CHEBI:133442"/>
        <dbReference type="ChEBI" id="CHEBI:133443"/>
        <dbReference type="EC" id="2.4.1.50"/>
    </reaction>
</comment>
<comment type="subcellular location">
    <subcellularLocation>
        <location evidence="3">Endoplasmic reticulum lumen</location>
    </subcellularLocation>
</comment>
<comment type="similarity">
    <text evidence="5">Belongs to the glycosyltransferase 25 family.</text>
</comment>
<reference key="1">
    <citation type="journal article" date="2013" name="Nature">
        <title>The zebrafish reference genome sequence and its relationship to the human genome.</title>
        <authorList>
            <person name="Howe K."/>
            <person name="Clark M.D."/>
            <person name="Torroja C.F."/>
            <person name="Torrance J."/>
            <person name="Berthelot C."/>
            <person name="Muffato M."/>
            <person name="Collins J.E."/>
            <person name="Humphray S."/>
            <person name="McLaren K."/>
            <person name="Matthews L."/>
            <person name="McLaren S."/>
            <person name="Sealy I."/>
            <person name="Caccamo M."/>
            <person name="Churcher C."/>
            <person name="Scott C."/>
            <person name="Barrett J.C."/>
            <person name="Koch R."/>
            <person name="Rauch G.J."/>
            <person name="White S."/>
            <person name="Chow W."/>
            <person name="Kilian B."/>
            <person name="Quintais L.T."/>
            <person name="Guerra-Assuncao J.A."/>
            <person name="Zhou Y."/>
            <person name="Gu Y."/>
            <person name="Yen J."/>
            <person name="Vogel J.H."/>
            <person name="Eyre T."/>
            <person name="Redmond S."/>
            <person name="Banerjee R."/>
            <person name="Chi J."/>
            <person name="Fu B."/>
            <person name="Langley E."/>
            <person name="Maguire S.F."/>
            <person name="Laird G.K."/>
            <person name="Lloyd D."/>
            <person name="Kenyon E."/>
            <person name="Donaldson S."/>
            <person name="Sehra H."/>
            <person name="Almeida-King J."/>
            <person name="Loveland J."/>
            <person name="Trevanion S."/>
            <person name="Jones M."/>
            <person name="Quail M."/>
            <person name="Willey D."/>
            <person name="Hunt A."/>
            <person name="Burton J."/>
            <person name="Sims S."/>
            <person name="McLay K."/>
            <person name="Plumb B."/>
            <person name="Davis J."/>
            <person name="Clee C."/>
            <person name="Oliver K."/>
            <person name="Clark R."/>
            <person name="Riddle C."/>
            <person name="Elliot D."/>
            <person name="Threadgold G."/>
            <person name="Harden G."/>
            <person name="Ware D."/>
            <person name="Begum S."/>
            <person name="Mortimore B."/>
            <person name="Kerry G."/>
            <person name="Heath P."/>
            <person name="Phillimore B."/>
            <person name="Tracey A."/>
            <person name="Corby N."/>
            <person name="Dunn M."/>
            <person name="Johnson C."/>
            <person name="Wood J."/>
            <person name="Clark S."/>
            <person name="Pelan S."/>
            <person name="Griffiths G."/>
            <person name="Smith M."/>
            <person name="Glithero R."/>
            <person name="Howden P."/>
            <person name="Barker N."/>
            <person name="Lloyd C."/>
            <person name="Stevens C."/>
            <person name="Harley J."/>
            <person name="Holt K."/>
            <person name="Panagiotidis G."/>
            <person name="Lovell J."/>
            <person name="Beasley H."/>
            <person name="Henderson C."/>
            <person name="Gordon D."/>
            <person name="Auger K."/>
            <person name="Wright D."/>
            <person name="Collins J."/>
            <person name="Raisen C."/>
            <person name="Dyer L."/>
            <person name="Leung K."/>
            <person name="Robertson L."/>
            <person name="Ambridge K."/>
            <person name="Leongamornlert D."/>
            <person name="McGuire S."/>
            <person name="Gilderthorp R."/>
            <person name="Griffiths C."/>
            <person name="Manthravadi D."/>
            <person name="Nichol S."/>
            <person name="Barker G."/>
            <person name="Whitehead S."/>
            <person name="Kay M."/>
            <person name="Brown J."/>
            <person name="Murnane C."/>
            <person name="Gray E."/>
            <person name="Humphries M."/>
            <person name="Sycamore N."/>
            <person name="Barker D."/>
            <person name="Saunders D."/>
            <person name="Wallis J."/>
            <person name="Babbage A."/>
            <person name="Hammond S."/>
            <person name="Mashreghi-Mohammadi M."/>
            <person name="Barr L."/>
            <person name="Martin S."/>
            <person name="Wray P."/>
            <person name="Ellington A."/>
            <person name="Matthews N."/>
            <person name="Ellwood M."/>
            <person name="Woodmansey R."/>
            <person name="Clark G."/>
            <person name="Cooper J."/>
            <person name="Tromans A."/>
            <person name="Grafham D."/>
            <person name="Skuce C."/>
            <person name="Pandian R."/>
            <person name="Andrews R."/>
            <person name="Harrison E."/>
            <person name="Kimberley A."/>
            <person name="Garnett J."/>
            <person name="Fosker N."/>
            <person name="Hall R."/>
            <person name="Garner P."/>
            <person name="Kelly D."/>
            <person name="Bird C."/>
            <person name="Palmer S."/>
            <person name="Gehring I."/>
            <person name="Berger A."/>
            <person name="Dooley C.M."/>
            <person name="Ersan-Urun Z."/>
            <person name="Eser C."/>
            <person name="Geiger H."/>
            <person name="Geisler M."/>
            <person name="Karotki L."/>
            <person name="Kirn A."/>
            <person name="Konantz J."/>
            <person name="Konantz M."/>
            <person name="Oberlander M."/>
            <person name="Rudolph-Geiger S."/>
            <person name="Teucke M."/>
            <person name="Lanz C."/>
            <person name="Raddatz G."/>
            <person name="Osoegawa K."/>
            <person name="Zhu B."/>
            <person name="Rapp A."/>
            <person name="Widaa S."/>
            <person name="Langford C."/>
            <person name="Yang F."/>
            <person name="Schuster S.C."/>
            <person name="Carter N.P."/>
            <person name="Harrow J."/>
            <person name="Ning Z."/>
            <person name="Herrero J."/>
            <person name="Searle S.M."/>
            <person name="Enright A."/>
            <person name="Geisler R."/>
            <person name="Plasterk R.H."/>
            <person name="Lee C."/>
            <person name="Westerfield M."/>
            <person name="de Jong P.J."/>
            <person name="Zon L.I."/>
            <person name="Postlethwait J.H."/>
            <person name="Nusslein-Volhard C."/>
            <person name="Hubbard T.J."/>
            <person name="Roest Crollius H."/>
            <person name="Rogers J."/>
            <person name="Stemple D.L."/>
        </authorList>
    </citation>
    <scope>NUCLEOTIDE SEQUENCE [LARGE SCALE GENOMIC DNA]</scope>
    <source>
        <strain>Tuebingen</strain>
    </source>
</reference>
<gene>
    <name type="primary">colgalt1</name>
    <name type="synonym">glt25d1</name>
    <name type="ORF">si:ch211-114l13.7</name>
    <name type="ORF">zgc:110667</name>
</gene>
<keyword id="KW-0256">Endoplasmic reticulum</keyword>
<keyword id="KW-0325">Glycoprotein</keyword>
<keyword id="KW-0328">Glycosyltransferase</keyword>
<keyword id="KW-1185">Reference proteome</keyword>
<keyword id="KW-0732">Signal</keyword>
<keyword id="KW-0808">Transferase</keyword>
<accession>A5PMF6</accession>
<feature type="signal peptide" evidence="2">
    <location>
        <begin position="1"/>
        <end position="18"/>
    </location>
</feature>
<feature type="chain" id="PRO_0000309538" description="Procollagen galactosyltransferase 1">
    <location>
        <begin position="19"/>
        <end position="604"/>
    </location>
</feature>
<feature type="region of interest" description="Disordered" evidence="4">
    <location>
        <begin position="570"/>
        <end position="604"/>
    </location>
</feature>
<feature type="short sequence motif" description="Prevents secretion from ER" evidence="3">
    <location>
        <begin position="601"/>
        <end position="604"/>
    </location>
</feature>
<feature type="compositionally biased region" description="Basic and acidic residues" evidence="4">
    <location>
        <begin position="570"/>
        <end position="580"/>
    </location>
</feature>
<feature type="compositionally biased region" description="Polar residues" evidence="4">
    <location>
        <begin position="584"/>
        <end position="597"/>
    </location>
</feature>
<feature type="glycosylation site" description="N-linked (GlcNAc...) asparagine" evidence="2">
    <location>
        <position position="78"/>
    </location>
</feature>
<feature type="glycosylation site" description="N-linked (GlcNAc...) asparagine" evidence="2">
    <location>
        <position position="166"/>
    </location>
</feature>
<feature type="glycosylation site" description="N-linked (GlcNAc...) asparagine" evidence="2">
    <location>
        <position position="363"/>
    </location>
</feature>
<feature type="glycosylation site" description="N-linked (GlcNAc...) asparagine" evidence="2">
    <location>
        <position position="561"/>
    </location>
</feature>
<organism>
    <name type="scientific">Danio rerio</name>
    <name type="common">Zebrafish</name>
    <name type="synonym">Brachydanio rerio</name>
    <dbReference type="NCBI Taxonomy" id="7955"/>
    <lineage>
        <taxon>Eukaryota</taxon>
        <taxon>Metazoa</taxon>
        <taxon>Chordata</taxon>
        <taxon>Craniata</taxon>
        <taxon>Vertebrata</taxon>
        <taxon>Euteleostomi</taxon>
        <taxon>Actinopterygii</taxon>
        <taxon>Neopterygii</taxon>
        <taxon>Teleostei</taxon>
        <taxon>Ostariophysi</taxon>
        <taxon>Cypriniformes</taxon>
        <taxon>Danionidae</taxon>
        <taxon>Danioninae</taxon>
        <taxon>Danio</taxon>
    </lineage>
</organism>
<proteinExistence type="inferred from homology"/>
<evidence type="ECO:0000250" key="1">
    <source>
        <dbReference type="UniProtKB" id="Q8NBJ5"/>
    </source>
</evidence>
<evidence type="ECO:0000255" key="2"/>
<evidence type="ECO:0000255" key="3">
    <source>
        <dbReference type="PROSITE-ProRule" id="PRU10138"/>
    </source>
</evidence>
<evidence type="ECO:0000256" key="4">
    <source>
        <dbReference type="SAM" id="MobiDB-lite"/>
    </source>
</evidence>
<evidence type="ECO:0000305" key="5"/>
<sequence>MHLLCFFFLLLWTGPARSYFPEERWSPESALLAPRVLVALVCRNSAHSLPHVLGAIDRLNYPKDRMAVWVATDHNSDNTTEILREWLVNVQNFYHYVEWRPQDEPSVYEGESGPKHWTNLRYEHVMKLRQAALETAREMWADYFMLVDCDNLLTNRDVLWKLMRENKTIVAPMLESRAAYSNFWCGMTSQGYYKRTPAYMPIRRQERKGCFAVPMVHSTLLLDLRKEASRQLAFFPPHPDYTWAFDDIIIFAFSARMAEVQMYICNRETYGYFPVPLRSQNSLQDEAESFLHSQLEVMVRNPPIEPSVYLSLMPKQTDKMGFDEVFMINLLRRSDRRERMLRTLYEQEIACKIITAVDGKALNASQVEALGIKMLPGYSDPYHGRPLTKGELGCFLSHYNIWNEIVDRGLQSSLVIEDDLRFEVFFKRRLQNLMQEVQSQQLDWDLIYIGRKRMQVERPEKSVPRIHSLVEADYSYWTLGYVISLRGAQKLLRAEPLKKMLPVDEFLPVMYNKHPIEEYMSHFPQRDLRAFSAEPLLIYPTHYTGDQGYISDTETSSVWDNESVLTDWDRARSRKSREQEELSSEAQNTDVLQSPLDSTARDEL</sequence>